<evidence type="ECO:0000255" key="1">
    <source>
        <dbReference type="HAMAP-Rule" id="MF_00011"/>
    </source>
</evidence>
<name>PURA_HAEDU</name>
<proteinExistence type="inferred from homology"/>
<accession>Q7VKR5</accession>
<sequence length="432" mass="47259">MGKSVAILGAQWGDEGKGKIVDLLTDRVKYVVRYQGGHNAGHTLIINGEKTVLRLIPSGILRENVTCLIGNGVVLSPEALMKEMGELEACGINVRERLKISEACPLILPYHVAMDHAREAALGKNKIGTTGRGIGPAYEDKVARRGLRVSDLFDKEAFATKLKDILDLYNFQLVHYYKVEPVDFQKTLDDVFAVADVIKGMVADVTTLLHQARKEGVNILFEGAQGTMLDIDHGTYPFVTSSNTTAGGVATGAGFGPRNLDYVLGIIKAYCTRVGSGPFTTELFNEEGETIARKGNEFGAVTGRPRRCGWFDAVAVRRAVQINSISGFCMTKLDVLDGFETLKICTAYKMPNGEIVEYAPMAAKDWEGVEPIYETMPGWSENTFGVIKYEALPQAALDYIKRIEELVGVPVDILSTGPDRIETMILRDPFVA</sequence>
<gene>
    <name evidence="1" type="primary">purA</name>
    <name type="ordered locus">HD_1807</name>
</gene>
<protein>
    <recommendedName>
        <fullName evidence="1">Adenylosuccinate synthetase</fullName>
        <shortName evidence="1">AMPSase</shortName>
        <shortName evidence="1">AdSS</shortName>
        <ecNumber evidence="1">6.3.4.4</ecNumber>
    </recommendedName>
    <alternativeName>
        <fullName evidence="1">IMP--aspartate ligase</fullName>
    </alternativeName>
</protein>
<comment type="function">
    <text evidence="1">Plays an important role in the de novo pathway of purine nucleotide biosynthesis. Catalyzes the first committed step in the biosynthesis of AMP from IMP.</text>
</comment>
<comment type="catalytic activity">
    <reaction evidence="1">
        <text>IMP + L-aspartate + GTP = N(6)-(1,2-dicarboxyethyl)-AMP + GDP + phosphate + 2 H(+)</text>
        <dbReference type="Rhea" id="RHEA:15753"/>
        <dbReference type="ChEBI" id="CHEBI:15378"/>
        <dbReference type="ChEBI" id="CHEBI:29991"/>
        <dbReference type="ChEBI" id="CHEBI:37565"/>
        <dbReference type="ChEBI" id="CHEBI:43474"/>
        <dbReference type="ChEBI" id="CHEBI:57567"/>
        <dbReference type="ChEBI" id="CHEBI:58053"/>
        <dbReference type="ChEBI" id="CHEBI:58189"/>
        <dbReference type="EC" id="6.3.4.4"/>
    </reaction>
</comment>
<comment type="cofactor">
    <cofactor evidence="1">
        <name>Mg(2+)</name>
        <dbReference type="ChEBI" id="CHEBI:18420"/>
    </cofactor>
    <text evidence="1">Binds 1 Mg(2+) ion per subunit.</text>
</comment>
<comment type="pathway">
    <text evidence="1">Purine metabolism; AMP biosynthesis via de novo pathway; AMP from IMP: step 1/2.</text>
</comment>
<comment type="subunit">
    <text evidence="1">Homodimer.</text>
</comment>
<comment type="subcellular location">
    <subcellularLocation>
        <location evidence="1">Cytoplasm</location>
    </subcellularLocation>
</comment>
<comment type="similarity">
    <text evidence="1">Belongs to the adenylosuccinate synthetase family.</text>
</comment>
<reference key="1">
    <citation type="submission" date="2003-06" db="EMBL/GenBank/DDBJ databases">
        <title>The complete genome sequence of Haemophilus ducreyi.</title>
        <authorList>
            <person name="Munson R.S. Jr."/>
            <person name="Ray W.C."/>
            <person name="Mahairas G."/>
            <person name="Sabo P."/>
            <person name="Mungur R."/>
            <person name="Johnson L."/>
            <person name="Nguyen D."/>
            <person name="Wang J."/>
            <person name="Forst C."/>
            <person name="Hood L."/>
        </authorList>
    </citation>
    <scope>NUCLEOTIDE SEQUENCE [LARGE SCALE GENOMIC DNA]</scope>
    <source>
        <strain>35000HP / ATCC 700724</strain>
    </source>
</reference>
<feature type="chain" id="PRO_0000095182" description="Adenylosuccinate synthetase">
    <location>
        <begin position="1"/>
        <end position="432"/>
    </location>
</feature>
<feature type="active site" description="Proton acceptor" evidence="1">
    <location>
        <position position="14"/>
    </location>
</feature>
<feature type="active site" description="Proton donor" evidence="1">
    <location>
        <position position="42"/>
    </location>
</feature>
<feature type="binding site" evidence="1">
    <location>
        <begin position="13"/>
        <end position="19"/>
    </location>
    <ligand>
        <name>GTP</name>
        <dbReference type="ChEBI" id="CHEBI:37565"/>
    </ligand>
</feature>
<feature type="binding site" description="in other chain" evidence="1">
    <location>
        <begin position="14"/>
        <end position="17"/>
    </location>
    <ligand>
        <name>IMP</name>
        <dbReference type="ChEBI" id="CHEBI:58053"/>
        <note>ligand shared between dimeric partners</note>
    </ligand>
</feature>
<feature type="binding site" evidence="1">
    <location>
        <position position="14"/>
    </location>
    <ligand>
        <name>Mg(2+)</name>
        <dbReference type="ChEBI" id="CHEBI:18420"/>
    </ligand>
</feature>
<feature type="binding site" description="in other chain" evidence="1">
    <location>
        <begin position="39"/>
        <end position="42"/>
    </location>
    <ligand>
        <name>IMP</name>
        <dbReference type="ChEBI" id="CHEBI:58053"/>
        <note>ligand shared between dimeric partners</note>
    </ligand>
</feature>
<feature type="binding site" evidence="1">
    <location>
        <begin position="41"/>
        <end position="43"/>
    </location>
    <ligand>
        <name>GTP</name>
        <dbReference type="ChEBI" id="CHEBI:37565"/>
    </ligand>
</feature>
<feature type="binding site" evidence="1">
    <location>
        <position position="41"/>
    </location>
    <ligand>
        <name>Mg(2+)</name>
        <dbReference type="ChEBI" id="CHEBI:18420"/>
    </ligand>
</feature>
<feature type="binding site" description="in other chain" evidence="1">
    <location>
        <position position="130"/>
    </location>
    <ligand>
        <name>IMP</name>
        <dbReference type="ChEBI" id="CHEBI:58053"/>
        <note>ligand shared between dimeric partners</note>
    </ligand>
</feature>
<feature type="binding site" evidence="1">
    <location>
        <position position="144"/>
    </location>
    <ligand>
        <name>IMP</name>
        <dbReference type="ChEBI" id="CHEBI:58053"/>
        <note>ligand shared between dimeric partners</note>
    </ligand>
</feature>
<feature type="binding site" description="in other chain" evidence="1">
    <location>
        <position position="225"/>
    </location>
    <ligand>
        <name>IMP</name>
        <dbReference type="ChEBI" id="CHEBI:58053"/>
        <note>ligand shared between dimeric partners</note>
    </ligand>
</feature>
<feature type="binding site" description="in other chain" evidence="1">
    <location>
        <position position="240"/>
    </location>
    <ligand>
        <name>IMP</name>
        <dbReference type="ChEBI" id="CHEBI:58053"/>
        <note>ligand shared between dimeric partners</note>
    </ligand>
</feature>
<feature type="binding site" evidence="1">
    <location>
        <begin position="300"/>
        <end position="306"/>
    </location>
    <ligand>
        <name>substrate</name>
    </ligand>
</feature>
<feature type="binding site" description="in other chain" evidence="1">
    <location>
        <position position="304"/>
    </location>
    <ligand>
        <name>IMP</name>
        <dbReference type="ChEBI" id="CHEBI:58053"/>
        <note>ligand shared between dimeric partners</note>
    </ligand>
</feature>
<feature type="binding site" evidence="1">
    <location>
        <position position="306"/>
    </location>
    <ligand>
        <name>GTP</name>
        <dbReference type="ChEBI" id="CHEBI:37565"/>
    </ligand>
</feature>
<feature type="binding site" evidence="1">
    <location>
        <begin position="332"/>
        <end position="334"/>
    </location>
    <ligand>
        <name>GTP</name>
        <dbReference type="ChEBI" id="CHEBI:37565"/>
    </ligand>
</feature>
<feature type="binding site" evidence="1">
    <location>
        <begin position="415"/>
        <end position="417"/>
    </location>
    <ligand>
        <name>GTP</name>
        <dbReference type="ChEBI" id="CHEBI:37565"/>
    </ligand>
</feature>
<dbReference type="EC" id="6.3.4.4" evidence="1"/>
<dbReference type="EMBL" id="AE017143">
    <property type="protein sequence ID" value="AAP96557.1"/>
    <property type="molecule type" value="Genomic_DNA"/>
</dbReference>
<dbReference type="RefSeq" id="WP_010945586.1">
    <property type="nucleotide sequence ID" value="NC_002940.2"/>
</dbReference>
<dbReference type="SMR" id="Q7VKR5"/>
<dbReference type="STRING" id="233412.HD_1807"/>
<dbReference type="KEGG" id="hdu:HD_1807"/>
<dbReference type="eggNOG" id="COG0104">
    <property type="taxonomic scope" value="Bacteria"/>
</dbReference>
<dbReference type="HOGENOM" id="CLU_029848_0_0_6"/>
<dbReference type="OrthoDB" id="9807553at2"/>
<dbReference type="UniPathway" id="UPA00075">
    <property type="reaction ID" value="UER00335"/>
</dbReference>
<dbReference type="Proteomes" id="UP000001022">
    <property type="component" value="Chromosome"/>
</dbReference>
<dbReference type="GO" id="GO:0005737">
    <property type="term" value="C:cytoplasm"/>
    <property type="evidence" value="ECO:0007669"/>
    <property type="project" value="UniProtKB-SubCell"/>
</dbReference>
<dbReference type="GO" id="GO:0004019">
    <property type="term" value="F:adenylosuccinate synthase activity"/>
    <property type="evidence" value="ECO:0007669"/>
    <property type="project" value="UniProtKB-UniRule"/>
</dbReference>
<dbReference type="GO" id="GO:0005525">
    <property type="term" value="F:GTP binding"/>
    <property type="evidence" value="ECO:0007669"/>
    <property type="project" value="UniProtKB-UniRule"/>
</dbReference>
<dbReference type="GO" id="GO:0000287">
    <property type="term" value="F:magnesium ion binding"/>
    <property type="evidence" value="ECO:0007669"/>
    <property type="project" value="UniProtKB-UniRule"/>
</dbReference>
<dbReference type="GO" id="GO:0044208">
    <property type="term" value="P:'de novo' AMP biosynthetic process"/>
    <property type="evidence" value="ECO:0007669"/>
    <property type="project" value="UniProtKB-UniRule"/>
</dbReference>
<dbReference type="GO" id="GO:0046040">
    <property type="term" value="P:IMP metabolic process"/>
    <property type="evidence" value="ECO:0007669"/>
    <property type="project" value="TreeGrafter"/>
</dbReference>
<dbReference type="CDD" id="cd03108">
    <property type="entry name" value="AdSS"/>
    <property type="match status" value="1"/>
</dbReference>
<dbReference type="FunFam" id="1.10.300.10:FF:000001">
    <property type="entry name" value="Adenylosuccinate synthetase"/>
    <property type="match status" value="1"/>
</dbReference>
<dbReference type="FunFam" id="3.90.170.10:FF:000001">
    <property type="entry name" value="Adenylosuccinate synthetase"/>
    <property type="match status" value="1"/>
</dbReference>
<dbReference type="Gene3D" id="3.40.440.10">
    <property type="entry name" value="Adenylosuccinate Synthetase, subunit A, domain 1"/>
    <property type="match status" value="1"/>
</dbReference>
<dbReference type="Gene3D" id="1.10.300.10">
    <property type="entry name" value="Adenylosuccinate Synthetase, subunit A, domain 2"/>
    <property type="match status" value="1"/>
</dbReference>
<dbReference type="Gene3D" id="3.90.170.10">
    <property type="entry name" value="Adenylosuccinate Synthetase, subunit A, domain 3"/>
    <property type="match status" value="1"/>
</dbReference>
<dbReference type="HAMAP" id="MF_00011">
    <property type="entry name" value="Adenylosucc_synth"/>
    <property type="match status" value="1"/>
</dbReference>
<dbReference type="InterPro" id="IPR018220">
    <property type="entry name" value="Adenylosuccin_syn_GTP-bd"/>
</dbReference>
<dbReference type="InterPro" id="IPR033128">
    <property type="entry name" value="Adenylosuccin_syn_Lys_AS"/>
</dbReference>
<dbReference type="InterPro" id="IPR042109">
    <property type="entry name" value="Adenylosuccinate_synth_dom1"/>
</dbReference>
<dbReference type="InterPro" id="IPR042110">
    <property type="entry name" value="Adenylosuccinate_synth_dom2"/>
</dbReference>
<dbReference type="InterPro" id="IPR042111">
    <property type="entry name" value="Adenylosuccinate_synth_dom3"/>
</dbReference>
<dbReference type="InterPro" id="IPR001114">
    <property type="entry name" value="Adenylosuccinate_synthetase"/>
</dbReference>
<dbReference type="InterPro" id="IPR027417">
    <property type="entry name" value="P-loop_NTPase"/>
</dbReference>
<dbReference type="NCBIfam" id="NF002223">
    <property type="entry name" value="PRK01117.1"/>
    <property type="match status" value="1"/>
</dbReference>
<dbReference type="NCBIfam" id="TIGR00184">
    <property type="entry name" value="purA"/>
    <property type="match status" value="1"/>
</dbReference>
<dbReference type="PANTHER" id="PTHR11846">
    <property type="entry name" value="ADENYLOSUCCINATE SYNTHETASE"/>
    <property type="match status" value="1"/>
</dbReference>
<dbReference type="PANTHER" id="PTHR11846:SF0">
    <property type="entry name" value="ADENYLOSUCCINATE SYNTHETASE"/>
    <property type="match status" value="1"/>
</dbReference>
<dbReference type="Pfam" id="PF00709">
    <property type="entry name" value="Adenylsucc_synt"/>
    <property type="match status" value="1"/>
</dbReference>
<dbReference type="SMART" id="SM00788">
    <property type="entry name" value="Adenylsucc_synt"/>
    <property type="match status" value="1"/>
</dbReference>
<dbReference type="SUPFAM" id="SSF52540">
    <property type="entry name" value="P-loop containing nucleoside triphosphate hydrolases"/>
    <property type="match status" value="1"/>
</dbReference>
<dbReference type="PROSITE" id="PS01266">
    <property type="entry name" value="ADENYLOSUCCIN_SYN_1"/>
    <property type="match status" value="1"/>
</dbReference>
<dbReference type="PROSITE" id="PS00513">
    <property type="entry name" value="ADENYLOSUCCIN_SYN_2"/>
    <property type="match status" value="1"/>
</dbReference>
<organism>
    <name type="scientific">Haemophilus ducreyi (strain 35000HP / ATCC 700724)</name>
    <dbReference type="NCBI Taxonomy" id="233412"/>
    <lineage>
        <taxon>Bacteria</taxon>
        <taxon>Pseudomonadati</taxon>
        <taxon>Pseudomonadota</taxon>
        <taxon>Gammaproteobacteria</taxon>
        <taxon>Pasteurellales</taxon>
        <taxon>Pasteurellaceae</taxon>
        <taxon>Haemophilus</taxon>
    </lineage>
</organism>
<keyword id="KW-0963">Cytoplasm</keyword>
<keyword id="KW-0342">GTP-binding</keyword>
<keyword id="KW-0436">Ligase</keyword>
<keyword id="KW-0460">Magnesium</keyword>
<keyword id="KW-0479">Metal-binding</keyword>
<keyword id="KW-0547">Nucleotide-binding</keyword>
<keyword id="KW-0658">Purine biosynthesis</keyword>
<keyword id="KW-1185">Reference proteome</keyword>